<feature type="chain" id="PRO_1000193216" description="Ribosome-binding factor A">
    <location>
        <begin position="1"/>
        <end position="128"/>
    </location>
</feature>
<evidence type="ECO:0000255" key="1">
    <source>
        <dbReference type="HAMAP-Rule" id="MF_00003"/>
    </source>
</evidence>
<accession>B7J4D5</accession>
<keyword id="KW-0963">Cytoplasm</keyword>
<keyword id="KW-1185">Reference proteome</keyword>
<keyword id="KW-0690">Ribosome biogenesis</keyword>
<sequence>MLHSSHRPYPRGARVAHLLREEIAAVLPRLHGMSSGLSPLPPSITMVDLPTDMRSATVYFSLMDGPDRADTIREVLQDHAGEIRQLLGRRLALRRIPPLHFVYDARFDRGAEMAELLAHLPPAPEDLP</sequence>
<protein>
    <recommendedName>
        <fullName evidence="1">Ribosome-binding factor A</fullName>
    </recommendedName>
</protein>
<dbReference type="EMBL" id="CP001219">
    <property type="protein sequence ID" value="ACK78965.1"/>
    <property type="molecule type" value="Genomic_DNA"/>
</dbReference>
<dbReference type="RefSeq" id="WP_012536118.1">
    <property type="nucleotide sequence ID" value="NC_011761.1"/>
</dbReference>
<dbReference type="SMR" id="B7J4D5"/>
<dbReference type="STRING" id="243159.AFE_0392"/>
<dbReference type="PaxDb" id="243159-AFE_0392"/>
<dbReference type="GeneID" id="65279768"/>
<dbReference type="KEGG" id="afr:AFE_0392"/>
<dbReference type="eggNOG" id="COG0858">
    <property type="taxonomic scope" value="Bacteria"/>
</dbReference>
<dbReference type="HOGENOM" id="CLU_089475_5_1_6"/>
<dbReference type="Proteomes" id="UP000001362">
    <property type="component" value="Chromosome"/>
</dbReference>
<dbReference type="GO" id="GO:0005829">
    <property type="term" value="C:cytosol"/>
    <property type="evidence" value="ECO:0007669"/>
    <property type="project" value="TreeGrafter"/>
</dbReference>
<dbReference type="GO" id="GO:0043024">
    <property type="term" value="F:ribosomal small subunit binding"/>
    <property type="evidence" value="ECO:0007669"/>
    <property type="project" value="TreeGrafter"/>
</dbReference>
<dbReference type="GO" id="GO:0030490">
    <property type="term" value="P:maturation of SSU-rRNA"/>
    <property type="evidence" value="ECO:0007669"/>
    <property type="project" value="UniProtKB-UniRule"/>
</dbReference>
<dbReference type="Gene3D" id="3.30.300.20">
    <property type="match status" value="1"/>
</dbReference>
<dbReference type="HAMAP" id="MF_00003">
    <property type="entry name" value="RbfA"/>
    <property type="match status" value="1"/>
</dbReference>
<dbReference type="InterPro" id="IPR015946">
    <property type="entry name" value="KH_dom-like_a/b"/>
</dbReference>
<dbReference type="InterPro" id="IPR000238">
    <property type="entry name" value="RbfA"/>
</dbReference>
<dbReference type="InterPro" id="IPR023799">
    <property type="entry name" value="RbfA_dom_sf"/>
</dbReference>
<dbReference type="InterPro" id="IPR020053">
    <property type="entry name" value="Ribosome-bd_factorA_CS"/>
</dbReference>
<dbReference type="PANTHER" id="PTHR33515">
    <property type="entry name" value="RIBOSOME-BINDING FACTOR A, CHLOROPLASTIC-RELATED"/>
    <property type="match status" value="1"/>
</dbReference>
<dbReference type="PANTHER" id="PTHR33515:SF1">
    <property type="entry name" value="RIBOSOME-BINDING FACTOR A, CHLOROPLASTIC-RELATED"/>
    <property type="match status" value="1"/>
</dbReference>
<dbReference type="Pfam" id="PF02033">
    <property type="entry name" value="RBFA"/>
    <property type="match status" value="1"/>
</dbReference>
<dbReference type="SUPFAM" id="SSF89919">
    <property type="entry name" value="Ribosome-binding factor A, RbfA"/>
    <property type="match status" value="1"/>
</dbReference>
<dbReference type="PROSITE" id="PS01319">
    <property type="entry name" value="RBFA"/>
    <property type="match status" value="1"/>
</dbReference>
<organism>
    <name type="scientific">Acidithiobacillus ferrooxidans (strain ATCC 23270 / DSM 14882 / CIP 104768 / NCIMB 8455)</name>
    <name type="common">Ferrobacillus ferrooxidans (strain ATCC 23270)</name>
    <dbReference type="NCBI Taxonomy" id="243159"/>
    <lineage>
        <taxon>Bacteria</taxon>
        <taxon>Pseudomonadati</taxon>
        <taxon>Pseudomonadota</taxon>
        <taxon>Acidithiobacillia</taxon>
        <taxon>Acidithiobacillales</taxon>
        <taxon>Acidithiobacillaceae</taxon>
        <taxon>Acidithiobacillus</taxon>
    </lineage>
</organism>
<name>RBFA_ACIF2</name>
<comment type="function">
    <text evidence="1">One of several proteins that assist in the late maturation steps of the functional core of the 30S ribosomal subunit. Associates with free 30S ribosomal subunits (but not with 30S subunits that are part of 70S ribosomes or polysomes). Required for efficient processing of 16S rRNA. May interact with the 5'-terminal helix region of 16S rRNA.</text>
</comment>
<comment type="subunit">
    <text evidence="1">Monomer. Binds 30S ribosomal subunits, but not 50S ribosomal subunits or 70S ribosomes.</text>
</comment>
<comment type="subcellular location">
    <subcellularLocation>
        <location evidence="1">Cytoplasm</location>
    </subcellularLocation>
</comment>
<comment type="similarity">
    <text evidence="1">Belongs to the RbfA family.</text>
</comment>
<gene>
    <name evidence="1" type="primary">rbfA</name>
    <name type="ordered locus">AFE_0392</name>
</gene>
<proteinExistence type="inferred from homology"/>
<reference key="1">
    <citation type="journal article" date="2008" name="BMC Genomics">
        <title>Acidithiobacillus ferrooxidans metabolism: from genome sequence to industrial applications.</title>
        <authorList>
            <person name="Valdes J."/>
            <person name="Pedroso I."/>
            <person name="Quatrini R."/>
            <person name="Dodson R.J."/>
            <person name="Tettelin H."/>
            <person name="Blake R. II"/>
            <person name="Eisen J.A."/>
            <person name="Holmes D.S."/>
        </authorList>
    </citation>
    <scope>NUCLEOTIDE SEQUENCE [LARGE SCALE GENOMIC DNA]</scope>
    <source>
        <strain>ATCC 23270 / DSM 14882 / CIP 104768 / NCIMB 8455</strain>
    </source>
</reference>